<name>HSPB8_RAT</name>
<proteinExistence type="evidence at protein level"/>
<comment type="function">
    <text evidence="1">Involved in the chaperone-assisted selective autophagy (CASA), a crucial process for protein quality control, particularly in mechanical strained cells and tissues such as muscle. Displays temperature-dependent chaperone activity.</text>
</comment>
<comment type="subunit">
    <text evidence="1 2">Monomer (By similarity). Forms a ternary complex with BAG3 and HSPA1A (By similarity). Component of the chaperone-assisted selective autophagy (CASA) complex consisting of BAG3, HSPA8/HSC70, HSPB8 and STUB1/CHIP (By similarity). Interacts with HSPB1 (By similarity). Interacts with DNAJB6 (By similarity). Interacts with BAG3 (By similarity).</text>
</comment>
<comment type="subcellular location">
    <subcellularLocation>
        <location evidence="2">Cytoplasm</location>
    </subcellularLocation>
    <subcellularLocation>
        <location evidence="2">Nucleus</location>
    </subcellularLocation>
    <text evidence="2">Translocates to nuclear foci during heat shock.</text>
</comment>
<comment type="induction">
    <text evidence="5">By heat shock.</text>
</comment>
<comment type="PTM">
    <text>Phosphorylated.</text>
</comment>
<comment type="similarity">
    <text evidence="3">Belongs to the small heat shock protein (HSP20) family.</text>
</comment>
<sequence length="196" mass="21592">MADGQLPFPCSYPSRLRRDPFRDSPLSSRLLDDGFGMDPFPDDLTAPWPEWALPRLSSAWPGTLRSGMVPRGPTATARFGVPAEGRNPPPFPGEPWKVCVNVHSFKPEELMVKTKDGYVEVSGKHEEKQQEGGIVSKNFTKKIQLPAEVDPVTVFASLSPEGLLIIEAPQVPPYSPFGESSFNNELPQDNQEVTCS</sequence>
<dbReference type="EMBL" id="AF314540">
    <property type="protein sequence ID" value="AAG34700.1"/>
    <property type="molecule type" value="mRNA"/>
</dbReference>
<dbReference type="EMBL" id="BC061748">
    <property type="protein sequence ID" value="AAH61748.1"/>
    <property type="molecule type" value="mRNA"/>
</dbReference>
<dbReference type="RefSeq" id="NP_446064.1">
    <property type="nucleotide sequence ID" value="NM_053612.2"/>
</dbReference>
<dbReference type="SMR" id="Q9EPX0"/>
<dbReference type="BioGRID" id="250211">
    <property type="interactions" value="2"/>
</dbReference>
<dbReference type="FunCoup" id="Q9EPX0">
    <property type="interactions" value="44"/>
</dbReference>
<dbReference type="IntAct" id="Q9EPX0">
    <property type="interactions" value="1"/>
</dbReference>
<dbReference type="STRING" id="10116.ENSRNOP00000033432"/>
<dbReference type="GlyGen" id="Q9EPX0">
    <property type="glycosylation" value="1 site"/>
</dbReference>
<dbReference type="iPTMnet" id="Q9EPX0"/>
<dbReference type="PhosphoSitePlus" id="Q9EPX0"/>
<dbReference type="jPOST" id="Q9EPX0"/>
<dbReference type="PaxDb" id="10116-ENSRNOP00000033432"/>
<dbReference type="Ensembl" id="ENSRNOT00000039275.4">
    <property type="protein sequence ID" value="ENSRNOP00000033432.3"/>
    <property type="gene ID" value="ENSRNOG00000022392.4"/>
</dbReference>
<dbReference type="GeneID" id="113906"/>
<dbReference type="KEGG" id="rno:113906"/>
<dbReference type="UCSC" id="RGD:71003">
    <property type="organism name" value="rat"/>
</dbReference>
<dbReference type="AGR" id="RGD:71003"/>
<dbReference type="CTD" id="26353"/>
<dbReference type="RGD" id="71003">
    <property type="gene designation" value="Hspb8"/>
</dbReference>
<dbReference type="eggNOG" id="KOG3591">
    <property type="taxonomic scope" value="Eukaryota"/>
</dbReference>
<dbReference type="GeneTree" id="ENSGT00940000160605"/>
<dbReference type="HOGENOM" id="CLU_095001_0_1_1"/>
<dbReference type="InParanoid" id="Q9EPX0"/>
<dbReference type="OMA" id="PCHYPSR"/>
<dbReference type="OrthoDB" id="10060792at2759"/>
<dbReference type="PhylomeDB" id="Q9EPX0"/>
<dbReference type="TreeFam" id="TF105049"/>
<dbReference type="Reactome" id="R-RNO-3371571">
    <property type="pathway name" value="HSF1-dependent transactivation"/>
</dbReference>
<dbReference type="PRO" id="PR:Q9EPX0"/>
<dbReference type="Proteomes" id="UP000002494">
    <property type="component" value="Chromosome 12"/>
</dbReference>
<dbReference type="Bgee" id="ENSRNOG00000022392">
    <property type="expression patterns" value="Expressed in skeletal muscle tissue and 20 other cell types or tissues"/>
</dbReference>
<dbReference type="GO" id="GO:0005737">
    <property type="term" value="C:cytoplasm"/>
    <property type="evidence" value="ECO:0000250"/>
    <property type="project" value="UniProtKB"/>
</dbReference>
<dbReference type="GO" id="GO:0005829">
    <property type="term" value="C:cytosol"/>
    <property type="evidence" value="ECO:0007669"/>
    <property type="project" value="Ensembl"/>
</dbReference>
<dbReference type="GO" id="GO:0005654">
    <property type="term" value="C:nucleoplasm"/>
    <property type="evidence" value="ECO:0007669"/>
    <property type="project" value="Ensembl"/>
</dbReference>
<dbReference type="GO" id="GO:0005634">
    <property type="term" value="C:nucleus"/>
    <property type="evidence" value="ECO:0000250"/>
    <property type="project" value="UniProtKB"/>
</dbReference>
<dbReference type="GO" id="GO:0101031">
    <property type="term" value="C:protein folding chaperone complex"/>
    <property type="evidence" value="ECO:0000266"/>
    <property type="project" value="RGD"/>
</dbReference>
<dbReference type="GO" id="GO:0042802">
    <property type="term" value="F:identical protein binding"/>
    <property type="evidence" value="ECO:0000266"/>
    <property type="project" value="RGD"/>
</dbReference>
<dbReference type="GO" id="GO:0042803">
    <property type="term" value="F:protein homodimerization activity"/>
    <property type="evidence" value="ECO:0000266"/>
    <property type="project" value="RGD"/>
</dbReference>
<dbReference type="GO" id="GO:0034620">
    <property type="term" value="P:cellular response to unfolded protein"/>
    <property type="evidence" value="ECO:0000266"/>
    <property type="project" value="RGD"/>
</dbReference>
<dbReference type="GO" id="GO:1905337">
    <property type="term" value="P:positive regulation of aggrephagy"/>
    <property type="evidence" value="ECO:0000266"/>
    <property type="project" value="RGD"/>
</dbReference>
<dbReference type="CDD" id="cd06480">
    <property type="entry name" value="ACD_HspB8_like"/>
    <property type="match status" value="1"/>
</dbReference>
<dbReference type="FunFam" id="2.60.40.790:FF:000028">
    <property type="entry name" value="Heat shock protein beta-8"/>
    <property type="match status" value="1"/>
</dbReference>
<dbReference type="Gene3D" id="2.60.40.790">
    <property type="match status" value="1"/>
</dbReference>
<dbReference type="InterPro" id="IPR002068">
    <property type="entry name" value="A-crystallin/Hsp20_dom"/>
</dbReference>
<dbReference type="InterPro" id="IPR001436">
    <property type="entry name" value="Alpha-crystallin/sHSP_animal"/>
</dbReference>
<dbReference type="InterPro" id="IPR008978">
    <property type="entry name" value="HSP20-like_chaperone"/>
</dbReference>
<dbReference type="InterPro" id="IPR043254">
    <property type="entry name" value="HSPB8"/>
</dbReference>
<dbReference type="InterPro" id="IPR042790">
    <property type="entry name" value="HspB8_ACD"/>
</dbReference>
<dbReference type="PANTHER" id="PTHR46906">
    <property type="entry name" value="HEAT SHOCK PROTEIN BETA-8"/>
    <property type="match status" value="1"/>
</dbReference>
<dbReference type="PANTHER" id="PTHR46906:SF1">
    <property type="entry name" value="HEAT SHOCK PROTEIN BETA-8"/>
    <property type="match status" value="1"/>
</dbReference>
<dbReference type="Pfam" id="PF00011">
    <property type="entry name" value="HSP20"/>
    <property type="match status" value="1"/>
</dbReference>
<dbReference type="PRINTS" id="PR00299">
    <property type="entry name" value="ACRYSTALLIN"/>
</dbReference>
<dbReference type="SUPFAM" id="SSF49764">
    <property type="entry name" value="HSP20-like chaperones"/>
    <property type="match status" value="1"/>
</dbReference>
<dbReference type="PROSITE" id="PS01031">
    <property type="entry name" value="SHSP"/>
    <property type="match status" value="1"/>
</dbReference>
<reference key="1">
    <citation type="journal article" date="2001" name="J. Biol. Chem.">
        <title>HSP22, a new member of the small heat shock protein superfamily, interacts with mimic of phosphorylated HSP27 (3DHSP27).</title>
        <authorList>
            <person name="Benndorf R."/>
            <person name="Sun X."/>
            <person name="Gilmont R.R."/>
            <person name="Biederman K.J."/>
            <person name="Molloy M.P."/>
            <person name="Goodmurphy C.W."/>
            <person name="Cheng H."/>
            <person name="Andrews P.C."/>
            <person name="Welsh M.J."/>
        </authorList>
    </citation>
    <scope>NUCLEOTIDE SEQUENCE [MRNA]</scope>
    <source>
        <strain>Wistar</strain>
        <tissue>Heart</tissue>
    </source>
</reference>
<reference key="2">
    <citation type="journal article" date="2004" name="Genome Res.">
        <title>The status, quality, and expansion of the NIH full-length cDNA project: the Mammalian Gene Collection (MGC).</title>
        <authorList>
            <consortium name="The MGC Project Team"/>
        </authorList>
    </citation>
    <scope>NUCLEOTIDE SEQUENCE [LARGE SCALE MRNA]</scope>
    <source>
        <tissue>Prostate</tissue>
    </source>
</reference>
<reference key="3">
    <citation type="journal article" date="2004" name="Biochem. J.">
        <title>Mammalian Hsp22 is a heat-inducible small heat shock protein with chaperone-like activity.</title>
        <authorList>
            <person name="Chowdary T.K."/>
            <person name="Raman B."/>
            <person name="Ramakrishna T."/>
            <person name="Rao C.M."/>
        </authorList>
    </citation>
    <scope>FUNCTION</scope>
    <scope>SUBUNIT</scope>
    <scope>INDUCTION</scope>
    <scope>CIRCULAR DICHROISM ANALYSIS</scope>
    <source>
        <tissue>Muscle</tissue>
    </source>
</reference>
<reference key="4">
    <citation type="journal article" date="2012" name="Nat. Commun.">
        <title>Quantitative maps of protein phosphorylation sites across 14 different rat organs and tissues.</title>
        <authorList>
            <person name="Lundby A."/>
            <person name="Secher A."/>
            <person name="Lage K."/>
            <person name="Nordsborg N.B."/>
            <person name="Dmytriyev A."/>
            <person name="Lundby C."/>
            <person name="Olsen J.V."/>
        </authorList>
    </citation>
    <scope>PHOSPHORYLATION [LARGE SCALE ANALYSIS] AT SER-24 AND SER-57</scope>
    <scope>IDENTIFICATION BY MASS SPECTROMETRY [LARGE SCALE ANALYSIS]</scope>
</reference>
<protein>
    <recommendedName>
        <fullName>Heat shock protein beta-8</fullName>
        <shortName>HspB8</shortName>
    </recommendedName>
    <alternativeName>
        <fullName>Alpha-crystallin C chain</fullName>
    </alternativeName>
    <alternativeName>
        <fullName>Small stress protein-like protein HSP22</fullName>
    </alternativeName>
</protein>
<feature type="chain" id="PRO_0000125949" description="Heat shock protein beta-8">
    <location>
        <begin position="1"/>
        <end position="196"/>
    </location>
</feature>
<feature type="domain" description="sHSP" evidence="3">
    <location>
        <begin position="74"/>
        <end position="185"/>
    </location>
</feature>
<feature type="region of interest" description="Disordered" evidence="4">
    <location>
        <begin position="1"/>
        <end position="28"/>
    </location>
</feature>
<feature type="region of interest" description="Disordered" evidence="4">
    <location>
        <begin position="176"/>
        <end position="196"/>
    </location>
</feature>
<feature type="compositionally biased region" description="Polar residues" evidence="4">
    <location>
        <begin position="178"/>
        <end position="196"/>
    </location>
</feature>
<feature type="modified residue" description="Phosphoserine" evidence="6">
    <location>
        <position position="24"/>
    </location>
</feature>
<feature type="modified residue" description="Phosphoserine" evidence="6">
    <location>
        <position position="57"/>
    </location>
</feature>
<feature type="modified residue" description="Phosphothreonine" evidence="2">
    <location>
        <position position="63"/>
    </location>
</feature>
<feature type="modified residue" description="Asymmetric dimethylarginine" evidence="1">
    <location>
        <position position="71"/>
    </location>
</feature>
<feature type="modified residue" description="Asymmetric dimethylarginine" evidence="1">
    <location>
        <position position="78"/>
    </location>
</feature>
<keyword id="KW-0143">Chaperone</keyword>
<keyword id="KW-0963">Cytoplasm</keyword>
<keyword id="KW-0488">Methylation</keyword>
<keyword id="KW-0539">Nucleus</keyword>
<keyword id="KW-0597">Phosphoprotein</keyword>
<keyword id="KW-1185">Reference proteome</keyword>
<keyword id="KW-0346">Stress response</keyword>
<gene>
    <name type="primary">Hspb8</name>
    <name type="synonym">Cryac</name>
    <name type="synonym">Hsp22</name>
</gene>
<evidence type="ECO:0000250" key="1">
    <source>
        <dbReference type="UniProtKB" id="Q9JK92"/>
    </source>
</evidence>
<evidence type="ECO:0000250" key="2">
    <source>
        <dbReference type="UniProtKB" id="Q9UJY1"/>
    </source>
</evidence>
<evidence type="ECO:0000255" key="3">
    <source>
        <dbReference type="PROSITE-ProRule" id="PRU00285"/>
    </source>
</evidence>
<evidence type="ECO:0000256" key="4">
    <source>
        <dbReference type="SAM" id="MobiDB-lite"/>
    </source>
</evidence>
<evidence type="ECO:0000269" key="5">
    <source>
    </source>
</evidence>
<evidence type="ECO:0007744" key="6">
    <source>
    </source>
</evidence>
<accession>Q9EPX0</accession>
<organism>
    <name type="scientific">Rattus norvegicus</name>
    <name type="common">Rat</name>
    <dbReference type="NCBI Taxonomy" id="10116"/>
    <lineage>
        <taxon>Eukaryota</taxon>
        <taxon>Metazoa</taxon>
        <taxon>Chordata</taxon>
        <taxon>Craniata</taxon>
        <taxon>Vertebrata</taxon>
        <taxon>Euteleostomi</taxon>
        <taxon>Mammalia</taxon>
        <taxon>Eutheria</taxon>
        <taxon>Euarchontoglires</taxon>
        <taxon>Glires</taxon>
        <taxon>Rodentia</taxon>
        <taxon>Myomorpha</taxon>
        <taxon>Muroidea</taxon>
        <taxon>Muridae</taxon>
        <taxon>Murinae</taxon>
        <taxon>Rattus</taxon>
    </lineage>
</organism>